<evidence type="ECO:0000255" key="1">
    <source>
        <dbReference type="PROSITE-ProRule" id="PRU00812"/>
    </source>
</evidence>
<evidence type="ECO:0000269" key="2">
    <source>
    </source>
</evidence>
<evidence type="ECO:0000269" key="3">
    <source>
    </source>
</evidence>
<evidence type="ECO:0000269" key="4">
    <source>
    </source>
</evidence>
<evidence type="ECO:0000305" key="5"/>
<evidence type="ECO:0000305" key="6">
    <source>
    </source>
</evidence>
<keyword id="KW-0963">Cytoplasm</keyword>
<keyword id="KW-0378">Hydrolase</keyword>
<keyword id="KW-0479">Metal-binding</keyword>
<keyword id="KW-0539">Nucleus</keyword>
<keyword id="KW-0904">Protein phosphatase</keyword>
<keyword id="KW-1185">Reference proteome</keyword>
<keyword id="KW-0804">Transcription</keyword>
<keyword id="KW-0805">Transcription regulation</keyword>
<keyword id="KW-0862">Zinc</keyword>
<keyword id="KW-0863">Zinc-finger</keyword>
<organism>
    <name type="scientific">Saccharomyces cerevisiae (strain ATCC 204508 / S288c)</name>
    <name type="common">Baker's yeast</name>
    <dbReference type="NCBI Taxonomy" id="559292"/>
    <lineage>
        <taxon>Eukaryota</taxon>
        <taxon>Fungi</taxon>
        <taxon>Dikarya</taxon>
        <taxon>Ascomycota</taxon>
        <taxon>Saccharomycotina</taxon>
        <taxon>Saccharomycetes</taxon>
        <taxon>Saccharomycetales</taxon>
        <taxon>Saccharomycetaceae</taxon>
        <taxon>Saccharomyces</taxon>
    </lineage>
</organism>
<proteinExistence type="evidence at protein level"/>
<reference key="1">
    <citation type="journal article" date="1996" name="Yeast">
        <title>Nucleotide sequence analysis of a 32,500 bp region of the right arm of Saccharomyces cerevisiae chromosome IV.</title>
        <authorList>
            <person name="Brandt P."/>
            <person name="Ramlow S."/>
            <person name="Otto B."/>
            <person name="Bloecker H."/>
        </authorList>
    </citation>
    <scope>NUCLEOTIDE SEQUENCE [GENOMIC DNA]</scope>
</reference>
<reference key="2">
    <citation type="journal article" date="1997" name="Nature">
        <title>The nucleotide sequence of Saccharomyces cerevisiae chromosome IV.</title>
        <authorList>
            <person name="Jacq C."/>
            <person name="Alt-Moerbe J."/>
            <person name="Andre B."/>
            <person name="Arnold W."/>
            <person name="Bahr A."/>
            <person name="Ballesta J.P.G."/>
            <person name="Bargues M."/>
            <person name="Baron L."/>
            <person name="Becker A."/>
            <person name="Biteau N."/>
            <person name="Bloecker H."/>
            <person name="Blugeon C."/>
            <person name="Boskovic J."/>
            <person name="Brandt P."/>
            <person name="Brueckner M."/>
            <person name="Buitrago M.J."/>
            <person name="Coster F."/>
            <person name="Delaveau T."/>
            <person name="del Rey F."/>
            <person name="Dujon B."/>
            <person name="Eide L.G."/>
            <person name="Garcia-Cantalejo J.M."/>
            <person name="Goffeau A."/>
            <person name="Gomez-Peris A."/>
            <person name="Granotier C."/>
            <person name="Hanemann V."/>
            <person name="Hankeln T."/>
            <person name="Hoheisel J.D."/>
            <person name="Jaeger W."/>
            <person name="Jimenez A."/>
            <person name="Jonniaux J.-L."/>
            <person name="Kraemer C."/>
            <person name="Kuester H."/>
            <person name="Laamanen P."/>
            <person name="Legros Y."/>
            <person name="Louis E.J."/>
            <person name="Moeller-Rieker S."/>
            <person name="Monnet A."/>
            <person name="Moro M."/>
            <person name="Mueller-Auer S."/>
            <person name="Nussbaumer B."/>
            <person name="Paricio N."/>
            <person name="Paulin L."/>
            <person name="Perea J."/>
            <person name="Perez-Alonso M."/>
            <person name="Perez-Ortin J.E."/>
            <person name="Pohl T.M."/>
            <person name="Prydz H."/>
            <person name="Purnelle B."/>
            <person name="Rasmussen S.W."/>
            <person name="Remacha M.A."/>
            <person name="Revuelta J.L."/>
            <person name="Rieger M."/>
            <person name="Salom D."/>
            <person name="Saluz H.P."/>
            <person name="Saiz J.E."/>
            <person name="Saren A.-M."/>
            <person name="Schaefer M."/>
            <person name="Scharfe M."/>
            <person name="Schmidt E.R."/>
            <person name="Schneider C."/>
            <person name="Scholler P."/>
            <person name="Schwarz S."/>
            <person name="Soler-Mira A."/>
            <person name="Urrestarazu L.A."/>
            <person name="Verhasselt P."/>
            <person name="Vissers S."/>
            <person name="Voet M."/>
            <person name="Volckaert G."/>
            <person name="Wagner G."/>
            <person name="Wambutt R."/>
            <person name="Wedler E."/>
            <person name="Wedler H."/>
            <person name="Woelfl S."/>
            <person name="Harris D.E."/>
            <person name="Bowman S."/>
            <person name="Brown D."/>
            <person name="Churcher C.M."/>
            <person name="Connor R."/>
            <person name="Dedman K."/>
            <person name="Gentles S."/>
            <person name="Hamlin N."/>
            <person name="Hunt S."/>
            <person name="Jones L."/>
            <person name="McDonald S."/>
            <person name="Murphy L.D."/>
            <person name="Niblett D."/>
            <person name="Odell C."/>
            <person name="Oliver K."/>
            <person name="Rajandream M.A."/>
            <person name="Richards C."/>
            <person name="Shore L."/>
            <person name="Walsh S.V."/>
            <person name="Barrell B.G."/>
            <person name="Dietrich F.S."/>
            <person name="Mulligan J.T."/>
            <person name="Allen E."/>
            <person name="Araujo R."/>
            <person name="Aviles E."/>
            <person name="Berno A."/>
            <person name="Carpenter J."/>
            <person name="Chen E."/>
            <person name="Cherry J.M."/>
            <person name="Chung E."/>
            <person name="Duncan M."/>
            <person name="Hunicke-Smith S."/>
            <person name="Hyman R.W."/>
            <person name="Komp C."/>
            <person name="Lashkari D."/>
            <person name="Lew H."/>
            <person name="Lin D."/>
            <person name="Mosedale D."/>
            <person name="Nakahara K."/>
            <person name="Namath A."/>
            <person name="Oefner P."/>
            <person name="Oh C."/>
            <person name="Petel F.X."/>
            <person name="Roberts D."/>
            <person name="Schramm S."/>
            <person name="Schroeder M."/>
            <person name="Shogren T."/>
            <person name="Shroff N."/>
            <person name="Winant A."/>
            <person name="Yelton M.A."/>
            <person name="Botstein D."/>
            <person name="Davis R.W."/>
            <person name="Johnston M."/>
            <person name="Andrews S."/>
            <person name="Brinkman R."/>
            <person name="Cooper J."/>
            <person name="Ding H."/>
            <person name="Du Z."/>
            <person name="Favello A."/>
            <person name="Fulton L."/>
            <person name="Gattung S."/>
            <person name="Greco T."/>
            <person name="Hallsworth K."/>
            <person name="Hawkins J."/>
            <person name="Hillier L.W."/>
            <person name="Jier M."/>
            <person name="Johnson D."/>
            <person name="Johnston L."/>
            <person name="Kirsten J."/>
            <person name="Kucaba T."/>
            <person name="Langston Y."/>
            <person name="Latreille P."/>
            <person name="Le T."/>
            <person name="Mardis E."/>
            <person name="Menezes S."/>
            <person name="Miller N."/>
            <person name="Nhan M."/>
            <person name="Pauley A."/>
            <person name="Peluso D."/>
            <person name="Rifkin L."/>
            <person name="Riles L."/>
            <person name="Taich A."/>
            <person name="Trevaskis E."/>
            <person name="Vignati D."/>
            <person name="Wilcox L."/>
            <person name="Wohldman P."/>
            <person name="Vaudin M."/>
            <person name="Wilson R."/>
            <person name="Waterston R."/>
            <person name="Albermann K."/>
            <person name="Hani J."/>
            <person name="Heumann K."/>
            <person name="Kleine K."/>
            <person name="Mewes H.-W."/>
            <person name="Zollner A."/>
            <person name="Zaccaria P."/>
        </authorList>
    </citation>
    <scope>NUCLEOTIDE SEQUENCE [LARGE SCALE GENOMIC DNA]</scope>
    <source>
        <strain>ATCC 204508 / S288c</strain>
    </source>
</reference>
<reference key="3">
    <citation type="journal article" date="2014" name="G3 (Bethesda)">
        <title>The reference genome sequence of Saccharomyces cerevisiae: Then and now.</title>
        <authorList>
            <person name="Engel S.R."/>
            <person name="Dietrich F.S."/>
            <person name="Fisk D.G."/>
            <person name="Binkley G."/>
            <person name="Balakrishnan R."/>
            <person name="Costanzo M.C."/>
            <person name="Dwight S.S."/>
            <person name="Hitz B.C."/>
            <person name="Karra K."/>
            <person name="Nash R.S."/>
            <person name="Weng S."/>
            <person name="Wong E.D."/>
            <person name="Lloyd P."/>
            <person name="Skrzypek M.S."/>
            <person name="Miyasato S.R."/>
            <person name="Simison M."/>
            <person name="Cherry J.M."/>
        </authorList>
    </citation>
    <scope>GENOME REANNOTATION</scope>
    <source>
        <strain>ATCC 204508 / S288c</strain>
    </source>
</reference>
<reference key="4">
    <citation type="journal article" date="2003" name="Nature">
        <title>Global analysis of protein localization in budding yeast.</title>
        <authorList>
            <person name="Huh W.-K."/>
            <person name="Falvo J.V."/>
            <person name="Gerke L.C."/>
            <person name="Carroll A.S."/>
            <person name="Howson R.W."/>
            <person name="Weissman J.S."/>
            <person name="O'Shea E.K."/>
        </authorList>
    </citation>
    <scope>SUBCELLULAR LOCATION [LARGE SCALE ANALYSIS]</scope>
</reference>
<reference key="5">
    <citation type="journal article" date="2003" name="Nature">
        <title>Global analysis of protein expression in yeast.</title>
        <authorList>
            <person name="Ghaemmaghami S."/>
            <person name="Huh W.-K."/>
            <person name="Bower K."/>
            <person name="Howson R.W."/>
            <person name="Belle A."/>
            <person name="Dephoure N."/>
            <person name="O'Shea E.K."/>
            <person name="Weissman J.S."/>
        </authorList>
    </citation>
    <scope>LEVEL OF PROTEIN EXPRESSION [LARGE SCALE ANALYSIS]</scope>
</reference>
<reference key="6">
    <citation type="journal article" date="2008" name="Eukaryot. Cell">
        <title>Rtr1 is the Saccharomyces cerevisiae homolog of a novel family of RNA polymerase II-binding proteins.</title>
        <authorList>
            <person name="Gibney P.A."/>
            <person name="Fries T."/>
            <person name="Bailer S.M."/>
            <person name="Morano K.A."/>
        </authorList>
    </citation>
    <scope>ZINC-FINGER</scope>
    <scope>FUNCTION</scope>
</reference>
<dbReference type="EC" id="3.1.3.16"/>
<dbReference type="EMBL" id="X84162">
    <property type="protein sequence ID" value="CAA58982.1"/>
    <property type="molecule type" value="Genomic_DNA"/>
</dbReference>
<dbReference type="EMBL" id="Z49209">
    <property type="protein sequence ID" value="CAA89095.1"/>
    <property type="molecule type" value="Genomic_DNA"/>
</dbReference>
<dbReference type="EMBL" id="Z74362">
    <property type="protein sequence ID" value="CAA98884.1"/>
    <property type="molecule type" value="Genomic_DNA"/>
</dbReference>
<dbReference type="EMBL" id="BK006938">
    <property type="protein sequence ID" value="DAA11912.1"/>
    <property type="molecule type" value="Genomic_DNA"/>
</dbReference>
<dbReference type="PIR" id="S54050">
    <property type="entry name" value="S54050"/>
</dbReference>
<dbReference type="RefSeq" id="NP_010351.1">
    <property type="nucleotide sequence ID" value="NM_001180374.1"/>
</dbReference>
<dbReference type="SMR" id="Q12378"/>
<dbReference type="BioGRID" id="32121">
    <property type="interactions" value="54"/>
</dbReference>
<dbReference type="DIP" id="DIP-5708N"/>
<dbReference type="FunCoup" id="Q12378">
    <property type="interactions" value="234"/>
</dbReference>
<dbReference type="IntAct" id="Q12378">
    <property type="interactions" value="1"/>
</dbReference>
<dbReference type="STRING" id="4932.YDR066C"/>
<dbReference type="iPTMnet" id="Q12378"/>
<dbReference type="PaxDb" id="4932-YDR066C"/>
<dbReference type="PeptideAtlas" id="Q12378"/>
<dbReference type="EnsemblFungi" id="YDR066C_mRNA">
    <property type="protein sequence ID" value="YDR066C"/>
    <property type="gene ID" value="YDR066C"/>
</dbReference>
<dbReference type="GeneID" id="851638"/>
<dbReference type="KEGG" id="sce:YDR066C"/>
<dbReference type="AGR" id="SGD:S000002473"/>
<dbReference type="SGD" id="S000002473">
    <property type="gene designation" value="RTR2"/>
</dbReference>
<dbReference type="VEuPathDB" id="FungiDB:YDR066C"/>
<dbReference type="eggNOG" id="KOG4780">
    <property type="taxonomic scope" value="Eukaryota"/>
</dbReference>
<dbReference type="GeneTree" id="ENSGT00390000017965"/>
<dbReference type="HOGENOM" id="CLU_086709_1_0_1"/>
<dbReference type="InParanoid" id="Q12378"/>
<dbReference type="OMA" id="IVEARMI"/>
<dbReference type="OrthoDB" id="2590500at2759"/>
<dbReference type="BioCyc" id="YEAST:G3O-29673-MONOMER"/>
<dbReference type="BioGRID-ORCS" id="851638">
    <property type="hits" value="0 hits in 10 CRISPR screens"/>
</dbReference>
<dbReference type="PRO" id="PR:Q12378"/>
<dbReference type="Proteomes" id="UP000002311">
    <property type="component" value="Chromosome IV"/>
</dbReference>
<dbReference type="RNAct" id="Q12378">
    <property type="molecule type" value="protein"/>
</dbReference>
<dbReference type="GO" id="GO:0005737">
    <property type="term" value="C:cytoplasm"/>
    <property type="evidence" value="ECO:0007005"/>
    <property type="project" value="SGD"/>
</dbReference>
<dbReference type="GO" id="GO:0005634">
    <property type="term" value="C:nucleus"/>
    <property type="evidence" value="ECO:0007005"/>
    <property type="project" value="SGD"/>
</dbReference>
<dbReference type="GO" id="GO:0043175">
    <property type="term" value="F:RNA polymerase core enzyme binding"/>
    <property type="evidence" value="ECO:0007669"/>
    <property type="project" value="InterPro"/>
</dbReference>
<dbReference type="GO" id="GO:0008420">
    <property type="term" value="F:RNA polymerase II CTD heptapeptide repeat phosphatase activity"/>
    <property type="evidence" value="ECO:0000318"/>
    <property type="project" value="GO_Central"/>
</dbReference>
<dbReference type="GO" id="GO:0008270">
    <property type="term" value="F:zinc ion binding"/>
    <property type="evidence" value="ECO:0007669"/>
    <property type="project" value="UniProtKB-KW"/>
</dbReference>
<dbReference type="FunFam" id="1.25.40.820:FF:000007">
    <property type="entry name" value="Conserved protein"/>
    <property type="match status" value="1"/>
</dbReference>
<dbReference type="Gene3D" id="1.25.40.820">
    <property type="match status" value="1"/>
</dbReference>
<dbReference type="InterPro" id="IPR039693">
    <property type="entry name" value="Rtr1/RPAP2"/>
</dbReference>
<dbReference type="InterPro" id="IPR007308">
    <property type="entry name" value="Rtr1/RPAP2_dom"/>
</dbReference>
<dbReference type="InterPro" id="IPR038534">
    <property type="entry name" value="Rtr1/RPAP2_sf"/>
</dbReference>
<dbReference type="PANTHER" id="PTHR14732">
    <property type="entry name" value="RNA POLYMERASE II SUBUNIT B1 CTD PHOSPHATASE RPAP2-RELATED"/>
    <property type="match status" value="1"/>
</dbReference>
<dbReference type="PANTHER" id="PTHR14732:SF0">
    <property type="entry name" value="RNA POLYMERASE II SUBUNIT B1 CTD PHOSPHATASE RPAP2-RELATED"/>
    <property type="match status" value="1"/>
</dbReference>
<dbReference type="PROSITE" id="PS51479">
    <property type="entry name" value="ZF_RTR1"/>
    <property type="match status" value="1"/>
</dbReference>
<protein>
    <recommendedName>
        <fullName>RNA polymerase II subunit B1 CTD phosphatase RTR2</fullName>
        <ecNumber>3.1.3.16</ecNumber>
    </recommendedName>
    <alternativeName>
        <fullName>RNA polymerase II-associated protein 2 homolog RTR2</fullName>
    </alternativeName>
    <alternativeName>
        <fullName>Regulator of transcription 2</fullName>
    </alternativeName>
</protein>
<comment type="function">
    <text evidence="4">Probable RNA polymerase II subunit B1 C-terminal domain (CTD) phosphatase that regulates RNA polymerase II transcription. May have functional redundancy with RTR1.</text>
</comment>
<comment type="catalytic activity">
    <reaction>
        <text>O-phospho-L-seryl-[protein] + H2O = L-seryl-[protein] + phosphate</text>
        <dbReference type="Rhea" id="RHEA:20629"/>
        <dbReference type="Rhea" id="RHEA-COMP:9863"/>
        <dbReference type="Rhea" id="RHEA-COMP:11604"/>
        <dbReference type="ChEBI" id="CHEBI:15377"/>
        <dbReference type="ChEBI" id="CHEBI:29999"/>
        <dbReference type="ChEBI" id="CHEBI:43474"/>
        <dbReference type="ChEBI" id="CHEBI:83421"/>
        <dbReference type="EC" id="3.1.3.16"/>
    </reaction>
</comment>
<comment type="catalytic activity">
    <reaction>
        <text>O-phospho-L-threonyl-[protein] + H2O = L-threonyl-[protein] + phosphate</text>
        <dbReference type="Rhea" id="RHEA:47004"/>
        <dbReference type="Rhea" id="RHEA-COMP:11060"/>
        <dbReference type="Rhea" id="RHEA-COMP:11605"/>
        <dbReference type="ChEBI" id="CHEBI:15377"/>
        <dbReference type="ChEBI" id="CHEBI:30013"/>
        <dbReference type="ChEBI" id="CHEBI:43474"/>
        <dbReference type="ChEBI" id="CHEBI:61977"/>
        <dbReference type="EC" id="3.1.3.16"/>
    </reaction>
</comment>
<comment type="subcellular location">
    <subcellularLocation>
        <location evidence="2">Cytoplasm</location>
    </subcellularLocation>
    <subcellularLocation>
        <location evidence="6">Nucleus</location>
    </subcellularLocation>
</comment>
<comment type="miscellaneous">
    <text evidence="3">Present with 1050 molecules/cell in log phase SD medium.</text>
</comment>
<comment type="similarity">
    <text evidence="1 5">Belongs to the RPAP2 family.</text>
</comment>
<feature type="chain" id="PRO_0000244439" description="RNA polymerase II subunit B1 CTD phosphatase RTR2">
    <location>
        <begin position="1"/>
        <end position="196"/>
    </location>
</feature>
<feature type="zinc finger region" description="RTR1-type" evidence="1">
    <location>
        <begin position="52"/>
        <end position="123"/>
    </location>
</feature>
<feature type="binding site" evidence="1">
    <location>
        <position position="75"/>
    </location>
    <ligand>
        <name>Zn(2+)</name>
        <dbReference type="ChEBI" id="CHEBI:29105"/>
    </ligand>
</feature>
<feature type="binding site" evidence="1">
    <location>
        <position position="80"/>
    </location>
    <ligand>
        <name>Zn(2+)</name>
        <dbReference type="ChEBI" id="CHEBI:29105"/>
    </ligand>
</feature>
<feature type="binding site" evidence="1">
    <location>
        <position position="99"/>
    </location>
    <ligand>
        <name>Zn(2+)</name>
        <dbReference type="ChEBI" id="CHEBI:29105"/>
    </ligand>
</feature>
<feature type="binding site" evidence="1">
    <location>
        <position position="103"/>
    </location>
    <ligand>
        <name>Zn(2+)</name>
        <dbReference type="ChEBI" id="CHEBI:29105"/>
    </ligand>
</feature>
<gene>
    <name type="primary">RTR2</name>
    <name type="ordered locus">YDR066C</name>
    <name type="ORF">D4261</name>
</gene>
<sequence length="196" mass="22541">MQIITTTFIQKVILGSHQLHEQLSIVEARMIESAIVSMLTESFCENEQTLKYLARLLSPMSYMDVINARRGKKICGYPLCYKSAAENSSDGFFIHSMYCNNYHSKCSLYLMRQLSQTPLHERRGVHLTSYINLEFDDMYSVSLLEELVGSEVPIDTVKSLITSFKDLEFDDTYKNEPLPLDVYFGQLTTDEETCIE</sequence>
<accession>Q12378</accession>
<accession>D6VS52</accession>
<name>RTR2_YEAST</name>